<proteinExistence type="inferred from homology"/>
<organism>
    <name type="scientific">Rhodococcus opacus (strain B4)</name>
    <dbReference type="NCBI Taxonomy" id="632772"/>
    <lineage>
        <taxon>Bacteria</taxon>
        <taxon>Bacillati</taxon>
        <taxon>Actinomycetota</taxon>
        <taxon>Actinomycetes</taxon>
        <taxon>Mycobacteriales</taxon>
        <taxon>Nocardiaceae</taxon>
        <taxon>Rhodococcus</taxon>
    </lineage>
</organism>
<keyword id="KW-0067">ATP-binding</keyword>
<keyword id="KW-0436">Ligase</keyword>
<keyword id="KW-0547">Nucleotide-binding</keyword>
<keyword id="KW-0648">Protein biosynthesis</keyword>
<dbReference type="EC" id="6.3.5.-" evidence="1"/>
<dbReference type="EMBL" id="AP011115">
    <property type="protein sequence ID" value="BAH54780.1"/>
    <property type="molecule type" value="Genomic_DNA"/>
</dbReference>
<dbReference type="RefSeq" id="WP_015890226.1">
    <property type="nucleotide sequence ID" value="NC_012522.1"/>
</dbReference>
<dbReference type="SMR" id="C1B2L3"/>
<dbReference type="STRING" id="632772.ROP_65330"/>
<dbReference type="KEGG" id="rop:ROP_65330"/>
<dbReference type="PATRIC" id="fig|632772.20.peg.6818"/>
<dbReference type="HOGENOM" id="CLU_019240_0_0_11"/>
<dbReference type="OrthoDB" id="9804078at2"/>
<dbReference type="Proteomes" id="UP000002212">
    <property type="component" value="Chromosome"/>
</dbReference>
<dbReference type="GO" id="GO:0050566">
    <property type="term" value="F:asparaginyl-tRNA synthase (glutamine-hydrolyzing) activity"/>
    <property type="evidence" value="ECO:0007669"/>
    <property type="project" value="RHEA"/>
</dbReference>
<dbReference type="GO" id="GO:0005524">
    <property type="term" value="F:ATP binding"/>
    <property type="evidence" value="ECO:0007669"/>
    <property type="project" value="UniProtKB-KW"/>
</dbReference>
<dbReference type="GO" id="GO:0050567">
    <property type="term" value="F:glutaminyl-tRNA synthase (glutamine-hydrolyzing) activity"/>
    <property type="evidence" value="ECO:0007669"/>
    <property type="project" value="UniProtKB-UniRule"/>
</dbReference>
<dbReference type="GO" id="GO:0070681">
    <property type="term" value="P:glutaminyl-tRNAGln biosynthesis via transamidation"/>
    <property type="evidence" value="ECO:0007669"/>
    <property type="project" value="TreeGrafter"/>
</dbReference>
<dbReference type="GO" id="GO:0006412">
    <property type="term" value="P:translation"/>
    <property type="evidence" value="ECO:0007669"/>
    <property type="project" value="UniProtKB-UniRule"/>
</dbReference>
<dbReference type="FunFam" id="1.10.10.410:FF:000002">
    <property type="entry name" value="Aspartyl/glutamyl-tRNA(Asn/Gln) amidotransferase subunit B"/>
    <property type="match status" value="1"/>
</dbReference>
<dbReference type="Gene3D" id="1.10.10.410">
    <property type="match status" value="1"/>
</dbReference>
<dbReference type="HAMAP" id="MF_00121">
    <property type="entry name" value="GatB"/>
    <property type="match status" value="1"/>
</dbReference>
<dbReference type="InterPro" id="IPR017959">
    <property type="entry name" value="Asn/Gln-tRNA_amidoTrfase_suB/E"/>
</dbReference>
<dbReference type="InterPro" id="IPR006075">
    <property type="entry name" value="Asn/Gln-tRNA_Trfase_suB/E_cat"/>
</dbReference>
<dbReference type="InterPro" id="IPR018027">
    <property type="entry name" value="Asn/Gln_amidotransferase"/>
</dbReference>
<dbReference type="InterPro" id="IPR003789">
    <property type="entry name" value="Asn/Gln_tRNA_amidoTrase-B-like"/>
</dbReference>
<dbReference type="InterPro" id="IPR004413">
    <property type="entry name" value="GatB"/>
</dbReference>
<dbReference type="InterPro" id="IPR023168">
    <property type="entry name" value="GatB_Yqey_C_2"/>
</dbReference>
<dbReference type="InterPro" id="IPR014746">
    <property type="entry name" value="Gln_synth/guanido_kin_cat_dom"/>
</dbReference>
<dbReference type="NCBIfam" id="TIGR00133">
    <property type="entry name" value="gatB"/>
    <property type="match status" value="1"/>
</dbReference>
<dbReference type="NCBIfam" id="NF004012">
    <property type="entry name" value="PRK05477.1-2"/>
    <property type="match status" value="1"/>
</dbReference>
<dbReference type="NCBIfam" id="NF004013">
    <property type="entry name" value="PRK05477.1-3"/>
    <property type="match status" value="1"/>
</dbReference>
<dbReference type="NCBIfam" id="NF004014">
    <property type="entry name" value="PRK05477.1-4"/>
    <property type="match status" value="1"/>
</dbReference>
<dbReference type="PANTHER" id="PTHR11659">
    <property type="entry name" value="GLUTAMYL-TRNA GLN AMIDOTRANSFERASE SUBUNIT B MITOCHONDRIAL AND PROKARYOTIC PET112-RELATED"/>
    <property type="match status" value="1"/>
</dbReference>
<dbReference type="PANTHER" id="PTHR11659:SF0">
    <property type="entry name" value="GLUTAMYL-TRNA(GLN) AMIDOTRANSFERASE SUBUNIT B, MITOCHONDRIAL"/>
    <property type="match status" value="1"/>
</dbReference>
<dbReference type="Pfam" id="PF02934">
    <property type="entry name" value="GatB_N"/>
    <property type="match status" value="1"/>
</dbReference>
<dbReference type="Pfam" id="PF02637">
    <property type="entry name" value="GatB_Yqey"/>
    <property type="match status" value="1"/>
</dbReference>
<dbReference type="SMART" id="SM00845">
    <property type="entry name" value="GatB_Yqey"/>
    <property type="match status" value="1"/>
</dbReference>
<dbReference type="SUPFAM" id="SSF89095">
    <property type="entry name" value="GatB/YqeY motif"/>
    <property type="match status" value="1"/>
</dbReference>
<dbReference type="SUPFAM" id="SSF55931">
    <property type="entry name" value="Glutamine synthetase/guanido kinase"/>
    <property type="match status" value="1"/>
</dbReference>
<evidence type="ECO:0000255" key="1">
    <source>
        <dbReference type="HAMAP-Rule" id="MF_00121"/>
    </source>
</evidence>
<reference key="1">
    <citation type="submission" date="2009-03" db="EMBL/GenBank/DDBJ databases">
        <title>Comparison of the complete genome sequences of Rhodococcus erythropolis PR4 and Rhodococcus opacus B4.</title>
        <authorList>
            <person name="Takarada H."/>
            <person name="Sekine M."/>
            <person name="Hosoyama A."/>
            <person name="Yamada R."/>
            <person name="Fujisawa T."/>
            <person name="Omata S."/>
            <person name="Shimizu A."/>
            <person name="Tsukatani N."/>
            <person name="Tanikawa S."/>
            <person name="Fujita N."/>
            <person name="Harayama S."/>
        </authorList>
    </citation>
    <scope>NUCLEOTIDE SEQUENCE [LARGE SCALE GENOMIC DNA]</scope>
    <source>
        <strain>B4</strain>
    </source>
</reference>
<name>GATB_RHOOB</name>
<sequence>MTAVDTPDLLDYDEVLAKYEPVLGMEVHVELGTNTKMFCPCPTEFGAEPNTQVCPVCLGLPGSLPVVNEAAVESAIRIGLALNCSITPWGRFARKNYFYPDQPKNYQISQYDEPIATDGYLDVVLDDGTTWRVEIERAHMEEDTGKSLHVGGATGRIHGASHSLLDYNRAGVPLVEIVTKTISGAGARAPEVARAYVTALRDLLKSLNVSDVRMDQGSMRCDANASLMPIGATELGTRTETKNVNSLKSVEVAVRYEMRRQAAVLEAGGEVIQETRHFQEADGTTSPGRRKETAEDYRYFPEPDLEPVAPSAEWVEELRGTLPELPWVRRARIQADWGVSDEVMRDLVNANALDLVIATVEAGASPEAARSWWVSYLAQQANTRGVELGELPITPAQVAQVVALIDSGKLNNKVARQVVDHVLAGEGDPEQVVADHPELVVERDDTKLKAAVDEALAANPDIAEKIRGGKVAAAGKIVGDVMKATRGQADPARVKELVIEACGG</sequence>
<protein>
    <recommendedName>
        <fullName evidence="1">Aspartyl/glutamyl-tRNA(Asn/Gln) amidotransferase subunit B</fullName>
        <shortName evidence="1">Asp/Glu-ADT subunit B</shortName>
        <ecNumber evidence="1">6.3.5.-</ecNumber>
    </recommendedName>
</protein>
<gene>
    <name evidence="1" type="primary">gatB</name>
    <name type="ordered locus">ROP_65330</name>
</gene>
<accession>C1B2L3</accession>
<comment type="function">
    <text evidence="1">Allows the formation of correctly charged Asn-tRNA(Asn) or Gln-tRNA(Gln) through the transamidation of misacylated Asp-tRNA(Asn) or Glu-tRNA(Gln) in organisms which lack either or both of asparaginyl-tRNA or glutaminyl-tRNA synthetases. The reaction takes place in the presence of glutamine and ATP through an activated phospho-Asp-tRNA(Asn) or phospho-Glu-tRNA(Gln).</text>
</comment>
<comment type="catalytic activity">
    <reaction evidence="1">
        <text>L-glutamyl-tRNA(Gln) + L-glutamine + ATP + H2O = L-glutaminyl-tRNA(Gln) + L-glutamate + ADP + phosphate + H(+)</text>
        <dbReference type="Rhea" id="RHEA:17521"/>
        <dbReference type="Rhea" id="RHEA-COMP:9681"/>
        <dbReference type="Rhea" id="RHEA-COMP:9684"/>
        <dbReference type="ChEBI" id="CHEBI:15377"/>
        <dbReference type="ChEBI" id="CHEBI:15378"/>
        <dbReference type="ChEBI" id="CHEBI:29985"/>
        <dbReference type="ChEBI" id="CHEBI:30616"/>
        <dbReference type="ChEBI" id="CHEBI:43474"/>
        <dbReference type="ChEBI" id="CHEBI:58359"/>
        <dbReference type="ChEBI" id="CHEBI:78520"/>
        <dbReference type="ChEBI" id="CHEBI:78521"/>
        <dbReference type="ChEBI" id="CHEBI:456216"/>
    </reaction>
</comment>
<comment type="catalytic activity">
    <reaction evidence="1">
        <text>L-aspartyl-tRNA(Asn) + L-glutamine + ATP + H2O = L-asparaginyl-tRNA(Asn) + L-glutamate + ADP + phosphate + 2 H(+)</text>
        <dbReference type="Rhea" id="RHEA:14513"/>
        <dbReference type="Rhea" id="RHEA-COMP:9674"/>
        <dbReference type="Rhea" id="RHEA-COMP:9677"/>
        <dbReference type="ChEBI" id="CHEBI:15377"/>
        <dbReference type="ChEBI" id="CHEBI:15378"/>
        <dbReference type="ChEBI" id="CHEBI:29985"/>
        <dbReference type="ChEBI" id="CHEBI:30616"/>
        <dbReference type="ChEBI" id="CHEBI:43474"/>
        <dbReference type="ChEBI" id="CHEBI:58359"/>
        <dbReference type="ChEBI" id="CHEBI:78515"/>
        <dbReference type="ChEBI" id="CHEBI:78516"/>
        <dbReference type="ChEBI" id="CHEBI:456216"/>
    </reaction>
</comment>
<comment type="subunit">
    <text evidence="1">Heterotrimer of A, B and C subunits.</text>
</comment>
<comment type="similarity">
    <text evidence="1">Belongs to the GatB/GatE family. GatB subfamily.</text>
</comment>
<feature type="chain" id="PRO_1000122532" description="Aspartyl/glutamyl-tRNA(Asn/Gln) amidotransferase subunit B">
    <location>
        <begin position="1"/>
        <end position="504"/>
    </location>
</feature>